<accession>Q5PGG5</accession>
<organism>
    <name type="scientific">Salmonella paratyphi A (strain ATCC 9150 / SARB42)</name>
    <dbReference type="NCBI Taxonomy" id="295319"/>
    <lineage>
        <taxon>Bacteria</taxon>
        <taxon>Pseudomonadati</taxon>
        <taxon>Pseudomonadota</taxon>
        <taxon>Gammaproteobacteria</taxon>
        <taxon>Enterobacterales</taxon>
        <taxon>Enterobacteriaceae</taxon>
        <taxon>Salmonella</taxon>
    </lineage>
</organism>
<feature type="chain" id="PRO_1000012466" description="3-phosphoshikimate 1-carboxyvinyltransferase">
    <location>
        <begin position="1"/>
        <end position="427"/>
    </location>
</feature>
<feature type="active site" description="Proton acceptor" evidence="1">
    <location>
        <position position="313"/>
    </location>
</feature>
<feature type="binding site" evidence="1">
    <location>
        <position position="22"/>
    </location>
    <ligand>
        <name>3-phosphoshikimate</name>
        <dbReference type="ChEBI" id="CHEBI:145989"/>
    </ligand>
</feature>
<feature type="binding site" evidence="1">
    <location>
        <position position="22"/>
    </location>
    <ligand>
        <name>phosphoenolpyruvate</name>
        <dbReference type="ChEBI" id="CHEBI:58702"/>
    </ligand>
</feature>
<feature type="binding site" evidence="1">
    <location>
        <position position="23"/>
    </location>
    <ligand>
        <name>3-phosphoshikimate</name>
        <dbReference type="ChEBI" id="CHEBI:145989"/>
    </ligand>
</feature>
<feature type="binding site" evidence="1">
    <location>
        <position position="27"/>
    </location>
    <ligand>
        <name>3-phosphoshikimate</name>
        <dbReference type="ChEBI" id="CHEBI:145989"/>
    </ligand>
</feature>
<feature type="binding site" evidence="1">
    <location>
        <position position="96"/>
    </location>
    <ligand>
        <name>phosphoenolpyruvate</name>
        <dbReference type="ChEBI" id="CHEBI:58702"/>
    </ligand>
</feature>
<feature type="binding site" evidence="1">
    <location>
        <position position="124"/>
    </location>
    <ligand>
        <name>phosphoenolpyruvate</name>
        <dbReference type="ChEBI" id="CHEBI:58702"/>
    </ligand>
</feature>
<feature type="binding site" evidence="1">
    <location>
        <position position="169"/>
    </location>
    <ligand>
        <name>3-phosphoshikimate</name>
        <dbReference type="ChEBI" id="CHEBI:145989"/>
    </ligand>
</feature>
<feature type="binding site" evidence="1">
    <location>
        <position position="170"/>
    </location>
    <ligand>
        <name>3-phosphoshikimate</name>
        <dbReference type="ChEBI" id="CHEBI:145989"/>
    </ligand>
</feature>
<feature type="binding site" evidence="1">
    <location>
        <position position="171"/>
    </location>
    <ligand>
        <name>3-phosphoshikimate</name>
        <dbReference type="ChEBI" id="CHEBI:145989"/>
    </ligand>
</feature>
<feature type="binding site" evidence="1">
    <location>
        <position position="171"/>
    </location>
    <ligand>
        <name>phosphoenolpyruvate</name>
        <dbReference type="ChEBI" id="CHEBI:58702"/>
    </ligand>
</feature>
<feature type="binding site" evidence="1">
    <location>
        <position position="197"/>
    </location>
    <ligand>
        <name>3-phosphoshikimate</name>
        <dbReference type="ChEBI" id="CHEBI:145989"/>
    </ligand>
</feature>
<feature type="binding site" evidence="1">
    <location>
        <position position="313"/>
    </location>
    <ligand>
        <name>3-phosphoshikimate</name>
        <dbReference type="ChEBI" id="CHEBI:145989"/>
    </ligand>
</feature>
<feature type="binding site" evidence="1">
    <location>
        <position position="336"/>
    </location>
    <ligand>
        <name>3-phosphoshikimate</name>
        <dbReference type="ChEBI" id="CHEBI:145989"/>
    </ligand>
</feature>
<feature type="binding site" evidence="1">
    <location>
        <position position="340"/>
    </location>
    <ligand>
        <name>3-phosphoshikimate</name>
        <dbReference type="ChEBI" id="CHEBI:145989"/>
    </ligand>
</feature>
<feature type="binding site" evidence="1">
    <location>
        <position position="344"/>
    </location>
    <ligand>
        <name>phosphoenolpyruvate</name>
        <dbReference type="ChEBI" id="CHEBI:58702"/>
    </ligand>
</feature>
<feature type="binding site" evidence="1">
    <location>
        <position position="386"/>
    </location>
    <ligand>
        <name>phosphoenolpyruvate</name>
        <dbReference type="ChEBI" id="CHEBI:58702"/>
    </ligand>
</feature>
<feature type="binding site" evidence="1">
    <location>
        <position position="411"/>
    </location>
    <ligand>
        <name>phosphoenolpyruvate</name>
        <dbReference type="ChEBI" id="CHEBI:58702"/>
    </ligand>
</feature>
<reference key="1">
    <citation type="journal article" date="2004" name="Nat. Genet.">
        <title>Comparison of genome degradation in Paratyphi A and Typhi, human-restricted serovars of Salmonella enterica that cause typhoid.</title>
        <authorList>
            <person name="McClelland M."/>
            <person name="Sanderson K.E."/>
            <person name="Clifton S.W."/>
            <person name="Latreille P."/>
            <person name="Porwollik S."/>
            <person name="Sabo A."/>
            <person name="Meyer R."/>
            <person name="Bieri T."/>
            <person name="Ozersky P."/>
            <person name="McLellan M."/>
            <person name="Harkins C.R."/>
            <person name="Wang C."/>
            <person name="Nguyen C."/>
            <person name="Berghoff A."/>
            <person name="Elliott G."/>
            <person name="Kohlberg S."/>
            <person name="Strong C."/>
            <person name="Du F."/>
            <person name="Carter J."/>
            <person name="Kremizki C."/>
            <person name="Layman D."/>
            <person name="Leonard S."/>
            <person name="Sun H."/>
            <person name="Fulton L."/>
            <person name="Nash W."/>
            <person name="Miner T."/>
            <person name="Minx P."/>
            <person name="Delehaunty K."/>
            <person name="Fronick C."/>
            <person name="Magrini V."/>
            <person name="Nhan M."/>
            <person name="Warren W."/>
            <person name="Florea L."/>
            <person name="Spieth J."/>
            <person name="Wilson R.K."/>
        </authorList>
    </citation>
    <scope>NUCLEOTIDE SEQUENCE [LARGE SCALE GENOMIC DNA]</scope>
    <source>
        <strain>ATCC 9150 / SARB42</strain>
    </source>
</reference>
<sequence length="427" mass="46198">MESLTLQPIARVDGAINLPGSKSVSNRALLLAALACGKTVLTNLLDSDDVRHMLNALSALGINYTLSADRTRCDITGNGGPLRASGALELFLGNAGTAMRPLAAALCLGQNEIVLTGEPRMKERPIGHLVDSLRQGGANIDYLEQENYPPLRLRGGFIGGDIEVDGSVSSQFLTALLMTAPLAPEDTIIRVKGELVSKPYIDITLNLMKTFGVEIANHHYQQFVVKGGQQYHSPGRYLVEGDASSASYFLAAGAIKGGTVKVTGIGRKSMQGDIRFADVLEKMGATITWGDDFIACTRGELHAIDMDMNHIPDAAMTIATTALFAKGTTTLRNIYNWRVKETDRLFAMATELRKVGAEVEEGHDYIRITPPAKLHHADIGTYNDHRMAMCFSLVALSDTPVTILDPKCTAKTFPDYFEQLARMSTPA</sequence>
<keyword id="KW-0028">Amino-acid biosynthesis</keyword>
<keyword id="KW-0057">Aromatic amino acid biosynthesis</keyword>
<keyword id="KW-0963">Cytoplasm</keyword>
<keyword id="KW-0808">Transferase</keyword>
<name>AROA_SALPA</name>
<gene>
    <name evidence="1" type="primary">aroA</name>
    <name type="ordered locus">SPA1820</name>
</gene>
<evidence type="ECO:0000255" key="1">
    <source>
        <dbReference type="HAMAP-Rule" id="MF_00210"/>
    </source>
</evidence>
<proteinExistence type="inferred from homology"/>
<dbReference type="EC" id="2.5.1.19" evidence="1"/>
<dbReference type="EMBL" id="CP000026">
    <property type="protein sequence ID" value="AAV77735.1"/>
    <property type="molecule type" value="Genomic_DNA"/>
</dbReference>
<dbReference type="RefSeq" id="WP_000445201.1">
    <property type="nucleotide sequence ID" value="NC_006511.1"/>
</dbReference>
<dbReference type="SMR" id="Q5PGG5"/>
<dbReference type="KEGG" id="spt:SPA1820"/>
<dbReference type="HOGENOM" id="CLU_024321_0_0_6"/>
<dbReference type="UniPathway" id="UPA00053">
    <property type="reaction ID" value="UER00089"/>
</dbReference>
<dbReference type="Proteomes" id="UP000008185">
    <property type="component" value="Chromosome"/>
</dbReference>
<dbReference type="GO" id="GO:0005737">
    <property type="term" value="C:cytoplasm"/>
    <property type="evidence" value="ECO:0007669"/>
    <property type="project" value="UniProtKB-SubCell"/>
</dbReference>
<dbReference type="GO" id="GO:0003866">
    <property type="term" value="F:3-phosphoshikimate 1-carboxyvinyltransferase activity"/>
    <property type="evidence" value="ECO:0007669"/>
    <property type="project" value="UniProtKB-UniRule"/>
</dbReference>
<dbReference type="GO" id="GO:0008652">
    <property type="term" value="P:amino acid biosynthetic process"/>
    <property type="evidence" value="ECO:0007669"/>
    <property type="project" value="UniProtKB-KW"/>
</dbReference>
<dbReference type="GO" id="GO:0009073">
    <property type="term" value="P:aromatic amino acid family biosynthetic process"/>
    <property type="evidence" value="ECO:0007669"/>
    <property type="project" value="UniProtKB-KW"/>
</dbReference>
<dbReference type="GO" id="GO:0009423">
    <property type="term" value="P:chorismate biosynthetic process"/>
    <property type="evidence" value="ECO:0007669"/>
    <property type="project" value="UniProtKB-UniRule"/>
</dbReference>
<dbReference type="FunFam" id="3.65.10.10:FF:000003">
    <property type="entry name" value="3-phosphoshikimate 1-carboxyvinyltransferase"/>
    <property type="match status" value="1"/>
</dbReference>
<dbReference type="FunFam" id="3.65.10.10:FF:000004">
    <property type="entry name" value="3-phosphoshikimate 1-carboxyvinyltransferase"/>
    <property type="match status" value="1"/>
</dbReference>
<dbReference type="Gene3D" id="3.65.10.10">
    <property type="entry name" value="Enolpyruvate transferase domain"/>
    <property type="match status" value="2"/>
</dbReference>
<dbReference type="HAMAP" id="MF_00210">
    <property type="entry name" value="EPSP_synth"/>
    <property type="match status" value="1"/>
</dbReference>
<dbReference type="InterPro" id="IPR001986">
    <property type="entry name" value="Enolpyruvate_Tfrase_dom"/>
</dbReference>
<dbReference type="InterPro" id="IPR036968">
    <property type="entry name" value="Enolpyruvate_Tfrase_sf"/>
</dbReference>
<dbReference type="InterPro" id="IPR006264">
    <property type="entry name" value="EPSP_synthase"/>
</dbReference>
<dbReference type="InterPro" id="IPR023193">
    <property type="entry name" value="EPSP_synthase_CS"/>
</dbReference>
<dbReference type="InterPro" id="IPR013792">
    <property type="entry name" value="RNA3'P_cycl/enolpyr_Trfase_a/b"/>
</dbReference>
<dbReference type="NCBIfam" id="TIGR01356">
    <property type="entry name" value="aroA"/>
    <property type="match status" value="1"/>
</dbReference>
<dbReference type="PANTHER" id="PTHR21090">
    <property type="entry name" value="AROM/DEHYDROQUINATE SYNTHASE"/>
    <property type="match status" value="1"/>
</dbReference>
<dbReference type="PANTHER" id="PTHR21090:SF5">
    <property type="entry name" value="PENTAFUNCTIONAL AROM POLYPEPTIDE"/>
    <property type="match status" value="1"/>
</dbReference>
<dbReference type="Pfam" id="PF00275">
    <property type="entry name" value="EPSP_synthase"/>
    <property type="match status" value="1"/>
</dbReference>
<dbReference type="PIRSF" id="PIRSF000505">
    <property type="entry name" value="EPSPS"/>
    <property type="match status" value="1"/>
</dbReference>
<dbReference type="SUPFAM" id="SSF55205">
    <property type="entry name" value="EPT/RTPC-like"/>
    <property type="match status" value="1"/>
</dbReference>
<dbReference type="PROSITE" id="PS00104">
    <property type="entry name" value="EPSP_SYNTHASE_1"/>
    <property type="match status" value="1"/>
</dbReference>
<dbReference type="PROSITE" id="PS00885">
    <property type="entry name" value="EPSP_SYNTHASE_2"/>
    <property type="match status" value="1"/>
</dbReference>
<protein>
    <recommendedName>
        <fullName evidence="1">3-phosphoshikimate 1-carboxyvinyltransferase</fullName>
        <ecNumber evidence="1">2.5.1.19</ecNumber>
    </recommendedName>
    <alternativeName>
        <fullName evidence="1">5-enolpyruvylshikimate-3-phosphate synthase</fullName>
        <shortName evidence="1">EPSP synthase</shortName>
        <shortName evidence="1">EPSPS</shortName>
    </alternativeName>
</protein>
<comment type="function">
    <text evidence="1">Catalyzes the transfer of the enolpyruvyl moiety of phosphoenolpyruvate (PEP) to the 5-hydroxyl of shikimate-3-phosphate (S3P) to produce enolpyruvyl shikimate-3-phosphate and inorganic phosphate.</text>
</comment>
<comment type="catalytic activity">
    <reaction evidence="1">
        <text>3-phosphoshikimate + phosphoenolpyruvate = 5-O-(1-carboxyvinyl)-3-phosphoshikimate + phosphate</text>
        <dbReference type="Rhea" id="RHEA:21256"/>
        <dbReference type="ChEBI" id="CHEBI:43474"/>
        <dbReference type="ChEBI" id="CHEBI:57701"/>
        <dbReference type="ChEBI" id="CHEBI:58702"/>
        <dbReference type="ChEBI" id="CHEBI:145989"/>
        <dbReference type="EC" id="2.5.1.19"/>
    </reaction>
    <physiologicalReaction direction="left-to-right" evidence="1">
        <dbReference type="Rhea" id="RHEA:21257"/>
    </physiologicalReaction>
</comment>
<comment type="pathway">
    <text evidence="1">Metabolic intermediate biosynthesis; chorismate biosynthesis; chorismate from D-erythrose 4-phosphate and phosphoenolpyruvate: step 6/7.</text>
</comment>
<comment type="subunit">
    <text evidence="1">Monomer.</text>
</comment>
<comment type="subcellular location">
    <subcellularLocation>
        <location evidence="1">Cytoplasm</location>
    </subcellularLocation>
</comment>
<comment type="similarity">
    <text evidence="1">Belongs to the EPSP synthase family.</text>
</comment>